<evidence type="ECO:0000250" key="1"/>
<evidence type="ECO:0000255" key="2"/>
<evidence type="ECO:0000256" key="3">
    <source>
        <dbReference type="SAM" id="MobiDB-lite"/>
    </source>
</evidence>
<evidence type="ECO:0000269" key="4">
    <source>
    </source>
</evidence>
<evidence type="ECO:0000305" key="5"/>
<reference key="1">
    <citation type="journal article" date="1998" name="Science">
        <title>Genome sequence of the nematode C. elegans: a platform for investigating biology.</title>
        <authorList>
            <consortium name="The C. elegans sequencing consortium"/>
        </authorList>
    </citation>
    <scope>NUCLEOTIDE SEQUENCE [LARGE SCALE GENOMIC DNA]</scope>
    <source>
        <strain>Bristol N2</strain>
    </source>
</reference>
<reference key="2">
    <citation type="journal article" date="2014" name="Genes Dev.">
        <title>Spatial control of phospholipid flux restricts endoplasmic reticulum sheet formation to allow nuclear envelope breakdown.</title>
        <authorList>
            <person name="Bahmanyar S."/>
            <person name="Biggs R."/>
            <person name="Schuh A.L."/>
            <person name="Desai A."/>
            <person name="Muller-Reichert T."/>
            <person name="Audhya A."/>
            <person name="Dixon J.E."/>
            <person name="Oegema K."/>
        </authorList>
    </citation>
    <scope>DISRUPTION PHENOTYPE</scope>
</reference>
<comment type="function">
    <text evidence="1">Provides CDP-diacylglycerol, an important precursor for the synthesis of phosphatidylinositol (PtdIns).</text>
</comment>
<comment type="catalytic activity">
    <reaction>
        <text>a 1,2-diacyl-sn-glycero-3-phosphate + CTP + H(+) = a CDP-1,2-diacyl-sn-glycerol + diphosphate</text>
        <dbReference type="Rhea" id="RHEA:16229"/>
        <dbReference type="ChEBI" id="CHEBI:15378"/>
        <dbReference type="ChEBI" id="CHEBI:33019"/>
        <dbReference type="ChEBI" id="CHEBI:37563"/>
        <dbReference type="ChEBI" id="CHEBI:58332"/>
        <dbReference type="ChEBI" id="CHEBI:58608"/>
        <dbReference type="EC" id="2.7.7.41"/>
    </reaction>
</comment>
<comment type="pathway">
    <text>Phospholipid metabolism; CDP-diacylglycerol biosynthesis; CDP-diacylglycerol from sn-glycerol 3-phosphate: step 3/3.</text>
</comment>
<comment type="subcellular location">
    <subcellularLocation>
        <location evidence="5">Membrane</location>
        <topology evidence="5">Multi-pass membrane protein</topology>
    </subcellularLocation>
</comment>
<comment type="alternative products">
    <event type="alternative splicing"/>
    <isoform>
        <id>P53439-1</id>
        <name>b</name>
        <sequence type="displayed"/>
    </isoform>
    <isoform>
        <id>P53439-2</id>
        <name>a</name>
        <sequence type="described" ref="VSP_055417"/>
    </isoform>
</comment>
<comment type="disruption phenotype">
    <text evidence="4">Reduced levels of phosphatidylinositol. No effect on two-cell stage nuclear morphology. Significant rescue of the nuclear morphology defects resulting from inhibition of cnep-1 or partial inhibition of lpin-1 but does not rescue the nuclear envelope disassembly defects observed following depletion of npp-12.</text>
</comment>
<comment type="similarity">
    <text evidence="5">Belongs to the CDS family.</text>
</comment>
<sequence>MSDQPPAENADVRQRRAPESPVTERLRAPARDDARPTSDESDMEGILQDEDSDAGSKNKEEKLERLTQAIPQDKGSLGVFADSMLEALPPRWRNWVVRGLFSIIMISTFTFIVTRGATWLMFLVFLIQFKCFQEIISIGLAVYRLYDFPWFRALSWYFLLTSNYFFFGESLIDYWGIVLKKDNFLHFLVAYHRLVSFALYCIGFVSFVLSLRKGYYMRQFSLFAWTHLTLLLIVSQSFFIIQNIFQGLIWFLAPVAMIICCDIMSYMFGFFWGKTPLIKLSPKKTWEGFIGGAFSTVVFGILLSLALYNRPFFVCPVQHYQTDSSNCTIPLAFQLQDYPVPRPFSFVYKILRKEPIIQLCPFVFHSIALSLFASILGPFGGFFASGFKRAFKIKDFGDVIPGHGGLMDRFDCQLLMGTFVMVYIHSFIRVPDASKLLKQIMTLEPQDQLNIFNLLQSELSKTGLI</sequence>
<protein>
    <recommendedName>
        <fullName>Phosphatidate cytidylyltransferase</fullName>
        <ecNumber>2.7.7.41</ecNumber>
    </recommendedName>
    <alternativeName>
        <fullName>CDP-DAG synthase</fullName>
    </alternativeName>
    <alternativeName>
        <fullName>CDP-DG synthase</fullName>
    </alternativeName>
    <alternativeName>
        <fullName>CDP-diacylglycerol synthase</fullName>
    </alternativeName>
    <alternativeName>
        <fullName>CDP-diglyceride pyrophosphorylase</fullName>
    </alternativeName>
    <alternativeName>
        <fullName>CDP-diglyceride synthase</fullName>
    </alternativeName>
</protein>
<proteinExistence type="inferred from homology"/>
<name>CDSA_CAEEL</name>
<keyword id="KW-0025">Alternative splicing</keyword>
<keyword id="KW-0444">Lipid biosynthesis</keyword>
<keyword id="KW-0443">Lipid metabolism</keyword>
<keyword id="KW-0472">Membrane</keyword>
<keyword id="KW-0548">Nucleotidyltransferase</keyword>
<keyword id="KW-0594">Phospholipid biosynthesis</keyword>
<keyword id="KW-1208">Phospholipid metabolism</keyword>
<keyword id="KW-1185">Reference proteome</keyword>
<keyword id="KW-0808">Transferase</keyword>
<keyword id="KW-0812">Transmembrane</keyword>
<keyword id="KW-1133">Transmembrane helix</keyword>
<feature type="chain" id="PRO_0000090719" description="Phosphatidate cytidylyltransferase">
    <location>
        <begin position="1"/>
        <end position="465"/>
    </location>
</feature>
<feature type="transmembrane region" description="Helical" evidence="2">
    <location>
        <begin position="95"/>
        <end position="117"/>
    </location>
</feature>
<feature type="transmembrane region" description="Helical" evidence="2">
    <location>
        <begin position="121"/>
        <end position="143"/>
    </location>
</feature>
<feature type="transmembrane region" description="Helical" evidence="2">
    <location>
        <begin position="158"/>
        <end position="178"/>
    </location>
</feature>
<feature type="transmembrane region" description="Helical" evidence="2">
    <location>
        <begin position="187"/>
        <end position="207"/>
    </location>
</feature>
<feature type="transmembrane region" description="Helical" evidence="2">
    <location>
        <begin position="214"/>
        <end position="234"/>
    </location>
</feature>
<feature type="transmembrane region" description="Helical" evidence="2">
    <location>
        <begin position="239"/>
        <end position="259"/>
    </location>
</feature>
<feature type="transmembrane region" description="Helical" evidence="2">
    <location>
        <begin position="288"/>
        <end position="308"/>
    </location>
</feature>
<feature type="transmembrane region" description="Helical" evidence="2">
    <location>
        <begin position="367"/>
        <end position="387"/>
    </location>
</feature>
<feature type="region of interest" description="Disordered" evidence="3">
    <location>
        <begin position="1"/>
        <end position="60"/>
    </location>
</feature>
<feature type="compositionally biased region" description="Basic and acidic residues" evidence="3">
    <location>
        <begin position="10"/>
        <end position="38"/>
    </location>
</feature>
<feature type="compositionally biased region" description="Acidic residues" evidence="3">
    <location>
        <begin position="39"/>
        <end position="53"/>
    </location>
</feature>
<feature type="splice variant" id="VSP_055417" description="In isoform a." evidence="5">
    <original>SDAGSKNKEEK</original>
    <variation>R</variation>
    <location>
        <begin position="52"/>
        <end position="62"/>
    </location>
</feature>
<accession>P53439</accession>
<accession>G8JY50</accession>
<gene>
    <name type="primary">cdgs-1</name>
    <name type="ORF">C33H5.18</name>
</gene>
<dbReference type="EC" id="2.7.7.41"/>
<dbReference type="EMBL" id="FO080768">
    <property type="protein sequence ID" value="CCD66581.1"/>
    <property type="molecule type" value="Genomic_DNA"/>
</dbReference>
<dbReference type="EMBL" id="FO080768">
    <property type="protein sequence ID" value="CCD66582.1"/>
    <property type="molecule type" value="Genomic_DNA"/>
</dbReference>
<dbReference type="PIR" id="T34155">
    <property type="entry name" value="T34155"/>
</dbReference>
<dbReference type="RefSeq" id="NP_501297.1">
    <molecule id="P53439-2"/>
    <property type="nucleotide sequence ID" value="NM_068896.7"/>
</dbReference>
<dbReference type="RefSeq" id="NP_501298.1">
    <molecule id="P53439-1"/>
    <property type="nucleotide sequence ID" value="NM_068897.5"/>
</dbReference>
<dbReference type="BioGRID" id="532364">
    <property type="interactions" value="1"/>
</dbReference>
<dbReference type="FunCoup" id="P53439">
    <property type="interactions" value="3444"/>
</dbReference>
<dbReference type="IntAct" id="P53439">
    <property type="interactions" value="1"/>
</dbReference>
<dbReference type="MINT" id="P53439"/>
<dbReference type="STRING" id="6239.C33H5.18b.2"/>
<dbReference type="iPTMnet" id="P53439"/>
<dbReference type="PaxDb" id="6239-C33H5.18b"/>
<dbReference type="PeptideAtlas" id="P53439"/>
<dbReference type="EnsemblMetazoa" id="C33H5.18a.1">
    <molecule id="P53439-2"/>
    <property type="protein sequence ID" value="C33H5.18a.1"/>
    <property type="gene ID" value="WBGene00016384"/>
</dbReference>
<dbReference type="EnsemblMetazoa" id="C33H5.18b.1">
    <molecule id="P53439-1"/>
    <property type="protein sequence ID" value="C33H5.18b.1"/>
    <property type="gene ID" value="WBGene00016384"/>
</dbReference>
<dbReference type="GeneID" id="3565046"/>
<dbReference type="KEGG" id="cel:CELE_C33H5.18"/>
<dbReference type="UCSC" id="C33H5.18b">
    <molecule id="P53439-1"/>
    <property type="organism name" value="c. elegans"/>
</dbReference>
<dbReference type="AGR" id="WB:WBGene00016384"/>
<dbReference type="CTD" id="3565046"/>
<dbReference type="WormBase" id="C33H5.18a">
    <molecule id="P53439-2"/>
    <property type="protein sequence ID" value="CE04161"/>
    <property type="gene ID" value="WBGene00016384"/>
    <property type="gene designation" value="cdgs-1"/>
</dbReference>
<dbReference type="WormBase" id="C33H5.18b">
    <molecule id="P53439-1"/>
    <property type="protein sequence ID" value="CE26907"/>
    <property type="gene ID" value="WBGene00016384"/>
    <property type="gene designation" value="cdgs-1"/>
</dbReference>
<dbReference type="eggNOG" id="KOG1440">
    <property type="taxonomic scope" value="Eukaryota"/>
</dbReference>
<dbReference type="GeneTree" id="ENSGT00940000170268"/>
<dbReference type="InParanoid" id="P53439"/>
<dbReference type="OMA" id="FFAYMYF"/>
<dbReference type="OrthoDB" id="10260889at2759"/>
<dbReference type="PhylomeDB" id="P53439"/>
<dbReference type="Reactome" id="R-CEL-1483148">
    <property type="pathway name" value="Synthesis of PG"/>
</dbReference>
<dbReference type="Reactome" id="R-CEL-1483226">
    <property type="pathway name" value="Synthesis of PI"/>
</dbReference>
<dbReference type="UniPathway" id="UPA00557">
    <property type="reaction ID" value="UER00614"/>
</dbReference>
<dbReference type="PRO" id="PR:P53439"/>
<dbReference type="Proteomes" id="UP000001940">
    <property type="component" value="Chromosome IV"/>
</dbReference>
<dbReference type="Bgee" id="WBGene00016384">
    <property type="expression patterns" value="Expressed in pharyngeal muscle cell (C elegans) and 4 other cell types or tissues"/>
</dbReference>
<dbReference type="GO" id="GO:0005789">
    <property type="term" value="C:endoplasmic reticulum membrane"/>
    <property type="evidence" value="ECO:0000318"/>
    <property type="project" value="GO_Central"/>
</dbReference>
<dbReference type="GO" id="GO:0004605">
    <property type="term" value="F:phosphatidate cytidylyltransferase activity"/>
    <property type="evidence" value="ECO:0007669"/>
    <property type="project" value="UniProtKB-EC"/>
</dbReference>
<dbReference type="GO" id="GO:0016024">
    <property type="term" value="P:CDP-diacylglycerol biosynthetic process"/>
    <property type="evidence" value="ECO:0007669"/>
    <property type="project" value="UniProtKB-UniPathway"/>
</dbReference>
<dbReference type="InterPro" id="IPR000374">
    <property type="entry name" value="PC_trans"/>
</dbReference>
<dbReference type="InterPro" id="IPR016720">
    <property type="entry name" value="PC_Trfase_euk"/>
</dbReference>
<dbReference type="PANTHER" id="PTHR13773">
    <property type="entry name" value="PHOSPHATIDATE CYTIDYLYLTRANSFERASE"/>
    <property type="match status" value="1"/>
</dbReference>
<dbReference type="PANTHER" id="PTHR13773:SF8">
    <property type="entry name" value="PHOSPHATIDATE CYTIDYLYLTRANSFERASE, PHOTORECEPTOR-SPECIFIC"/>
    <property type="match status" value="1"/>
</dbReference>
<dbReference type="Pfam" id="PF01148">
    <property type="entry name" value="CTP_transf_1"/>
    <property type="match status" value="1"/>
</dbReference>
<dbReference type="PIRSF" id="PIRSF018269">
    <property type="entry name" value="PC_trans_euk"/>
    <property type="match status" value="1"/>
</dbReference>
<dbReference type="PROSITE" id="PS01315">
    <property type="entry name" value="CDS"/>
    <property type="match status" value="1"/>
</dbReference>
<organism>
    <name type="scientific">Caenorhabditis elegans</name>
    <dbReference type="NCBI Taxonomy" id="6239"/>
    <lineage>
        <taxon>Eukaryota</taxon>
        <taxon>Metazoa</taxon>
        <taxon>Ecdysozoa</taxon>
        <taxon>Nematoda</taxon>
        <taxon>Chromadorea</taxon>
        <taxon>Rhabditida</taxon>
        <taxon>Rhabditina</taxon>
        <taxon>Rhabditomorpha</taxon>
        <taxon>Rhabditoidea</taxon>
        <taxon>Rhabditidae</taxon>
        <taxon>Peloderinae</taxon>
        <taxon>Caenorhabditis</taxon>
    </lineage>
</organism>